<proteinExistence type="inferred from homology"/>
<reference key="1">
    <citation type="journal article" date="2006" name="Environ. Microbiol.">
        <title>Whole genome analysis of the marine Bacteroidetes'Gramella forsetii' reveals adaptations to degradation of polymeric organic matter.</title>
        <authorList>
            <person name="Bauer M."/>
            <person name="Kube M."/>
            <person name="Teeling H."/>
            <person name="Richter M."/>
            <person name="Lombardot T."/>
            <person name="Allers E."/>
            <person name="Wuerdemann C.A."/>
            <person name="Quast C."/>
            <person name="Kuhl H."/>
            <person name="Knaust F."/>
            <person name="Woebken D."/>
            <person name="Bischof K."/>
            <person name="Mussmann M."/>
            <person name="Choudhuri J.V."/>
            <person name="Meyer F."/>
            <person name="Reinhardt R."/>
            <person name="Amann R.I."/>
            <person name="Gloeckner F.O."/>
        </authorList>
    </citation>
    <scope>NUCLEOTIDE SEQUENCE [LARGE SCALE GENOMIC DNA]</scope>
    <source>
        <strain>DSM 17595 / CGMCC 1.15422 / KT0803</strain>
    </source>
</reference>
<name>RL1_CHRFK</name>
<comment type="function">
    <text evidence="1">Binds directly to 23S rRNA. The L1 stalk is quite mobile in the ribosome, and is involved in E site tRNA release.</text>
</comment>
<comment type="function">
    <text evidence="1">Protein L1 is also a translational repressor protein, it controls the translation of the L11 operon by binding to its mRNA.</text>
</comment>
<comment type="subunit">
    <text evidence="1">Part of the 50S ribosomal subunit.</text>
</comment>
<comment type="similarity">
    <text evidence="1">Belongs to the universal ribosomal protein uL1 family.</text>
</comment>
<gene>
    <name evidence="1" type="primary">rplA</name>
    <name type="ordered locus">GFO_2373</name>
</gene>
<dbReference type="EMBL" id="CU207366">
    <property type="protein sequence ID" value="CAL67337.1"/>
    <property type="molecule type" value="Genomic_DNA"/>
</dbReference>
<dbReference type="RefSeq" id="WP_011710240.1">
    <property type="nucleotide sequence ID" value="NC_008571.1"/>
</dbReference>
<dbReference type="SMR" id="A0M3Z2"/>
<dbReference type="STRING" id="411154.GFO_2373"/>
<dbReference type="KEGG" id="gfo:GFO_2373"/>
<dbReference type="eggNOG" id="COG0081">
    <property type="taxonomic scope" value="Bacteria"/>
</dbReference>
<dbReference type="HOGENOM" id="CLU_062853_0_0_10"/>
<dbReference type="OrthoDB" id="9803740at2"/>
<dbReference type="Proteomes" id="UP000000755">
    <property type="component" value="Chromosome"/>
</dbReference>
<dbReference type="GO" id="GO:0015934">
    <property type="term" value="C:large ribosomal subunit"/>
    <property type="evidence" value="ECO:0007669"/>
    <property type="project" value="InterPro"/>
</dbReference>
<dbReference type="GO" id="GO:0019843">
    <property type="term" value="F:rRNA binding"/>
    <property type="evidence" value="ECO:0007669"/>
    <property type="project" value="UniProtKB-UniRule"/>
</dbReference>
<dbReference type="GO" id="GO:0003735">
    <property type="term" value="F:structural constituent of ribosome"/>
    <property type="evidence" value="ECO:0007669"/>
    <property type="project" value="InterPro"/>
</dbReference>
<dbReference type="GO" id="GO:0000049">
    <property type="term" value="F:tRNA binding"/>
    <property type="evidence" value="ECO:0007669"/>
    <property type="project" value="UniProtKB-KW"/>
</dbReference>
<dbReference type="GO" id="GO:0006417">
    <property type="term" value="P:regulation of translation"/>
    <property type="evidence" value="ECO:0007669"/>
    <property type="project" value="UniProtKB-KW"/>
</dbReference>
<dbReference type="GO" id="GO:0006412">
    <property type="term" value="P:translation"/>
    <property type="evidence" value="ECO:0007669"/>
    <property type="project" value="UniProtKB-UniRule"/>
</dbReference>
<dbReference type="CDD" id="cd00403">
    <property type="entry name" value="Ribosomal_L1"/>
    <property type="match status" value="1"/>
</dbReference>
<dbReference type="FunFam" id="3.40.50.790:FF:000001">
    <property type="entry name" value="50S ribosomal protein L1"/>
    <property type="match status" value="1"/>
</dbReference>
<dbReference type="Gene3D" id="3.30.190.20">
    <property type="match status" value="1"/>
</dbReference>
<dbReference type="Gene3D" id="3.40.50.790">
    <property type="match status" value="1"/>
</dbReference>
<dbReference type="HAMAP" id="MF_01318_B">
    <property type="entry name" value="Ribosomal_uL1_B"/>
    <property type="match status" value="1"/>
</dbReference>
<dbReference type="InterPro" id="IPR005878">
    <property type="entry name" value="Ribosom_uL1_bac-type"/>
</dbReference>
<dbReference type="InterPro" id="IPR002143">
    <property type="entry name" value="Ribosomal_uL1"/>
</dbReference>
<dbReference type="InterPro" id="IPR023674">
    <property type="entry name" value="Ribosomal_uL1-like"/>
</dbReference>
<dbReference type="InterPro" id="IPR028364">
    <property type="entry name" value="Ribosomal_uL1/biogenesis"/>
</dbReference>
<dbReference type="InterPro" id="IPR016095">
    <property type="entry name" value="Ribosomal_uL1_3-a/b-sand"/>
</dbReference>
<dbReference type="InterPro" id="IPR023673">
    <property type="entry name" value="Ribosomal_uL1_CS"/>
</dbReference>
<dbReference type="NCBIfam" id="TIGR01169">
    <property type="entry name" value="rplA_bact"/>
    <property type="match status" value="1"/>
</dbReference>
<dbReference type="PANTHER" id="PTHR36427">
    <property type="entry name" value="54S RIBOSOMAL PROTEIN L1, MITOCHONDRIAL"/>
    <property type="match status" value="1"/>
</dbReference>
<dbReference type="PANTHER" id="PTHR36427:SF3">
    <property type="entry name" value="LARGE RIBOSOMAL SUBUNIT PROTEIN UL1M"/>
    <property type="match status" value="1"/>
</dbReference>
<dbReference type="Pfam" id="PF00687">
    <property type="entry name" value="Ribosomal_L1"/>
    <property type="match status" value="1"/>
</dbReference>
<dbReference type="PIRSF" id="PIRSF002155">
    <property type="entry name" value="Ribosomal_L1"/>
    <property type="match status" value="1"/>
</dbReference>
<dbReference type="SUPFAM" id="SSF56808">
    <property type="entry name" value="Ribosomal protein L1"/>
    <property type="match status" value="1"/>
</dbReference>
<dbReference type="PROSITE" id="PS01199">
    <property type="entry name" value="RIBOSOMAL_L1"/>
    <property type="match status" value="1"/>
</dbReference>
<feature type="chain" id="PRO_0000308014" description="Large ribosomal subunit protein uL1">
    <location>
        <begin position="1"/>
        <end position="232"/>
    </location>
</feature>
<organism>
    <name type="scientific">Christiangramia forsetii (strain DSM 17595 / CGMCC 1.15422 / KT0803)</name>
    <name type="common">Gramella forsetii</name>
    <dbReference type="NCBI Taxonomy" id="411154"/>
    <lineage>
        <taxon>Bacteria</taxon>
        <taxon>Pseudomonadati</taxon>
        <taxon>Bacteroidota</taxon>
        <taxon>Flavobacteriia</taxon>
        <taxon>Flavobacteriales</taxon>
        <taxon>Flavobacteriaceae</taxon>
        <taxon>Christiangramia</taxon>
    </lineage>
</organism>
<keyword id="KW-0678">Repressor</keyword>
<keyword id="KW-0687">Ribonucleoprotein</keyword>
<keyword id="KW-0689">Ribosomal protein</keyword>
<keyword id="KW-0694">RNA-binding</keyword>
<keyword id="KW-0699">rRNA-binding</keyword>
<keyword id="KW-0810">Translation regulation</keyword>
<keyword id="KW-0820">tRNA-binding</keyword>
<evidence type="ECO:0000255" key="1">
    <source>
        <dbReference type="HAMAP-Rule" id="MF_01318"/>
    </source>
</evidence>
<evidence type="ECO:0000305" key="2"/>
<accession>A0M3Z2</accession>
<protein>
    <recommendedName>
        <fullName evidence="1">Large ribosomal subunit protein uL1</fullName>
    </recommendedName>
    <alternativeName>
        <fullName evidence="2">50S ribosomal protein L1</fullName>
    </alternativeName>
</protein>
<sequence>MAKLTKKQKEAQSKIENGKTYTVAEASALIKEVSNANFDASVDLAVRLNVDPRKANQMVRGVVTLPHGTGKDVKVLALVTPDKEEEAKEAGADYVGLDEYLDKIKGGWTDVDVIITMPSVMGKLGPLGRVLGPRGLMPNPKTGTVTMDIAKAVSDVKAGKIDFKVDKHGIVHAGVGKASFDAEKIAGNARELLTTLVKLKPQAAKGVYIKTIYMSSTMSPSVQIDTKRFTEQ</sequence>